<sequence>MFGLKQFYQNEVRIKLAQELDIKNPMLLPKLEKIVISVGAGAYAKDMKIMQNIAQTISLIAGQKAVITKAKKSVAGFKIREGMAVGAKVTLRNKRMYNFLEKLIVISLPRVKDFRGISRNGFDGRGNYTFGINEQLIFPEVVYDDIMVSHGMNITMVTSTDNDKEAFKLLELLGLPFAKVR</sequence>
<name>RL5_HELPH</name>
<feature type="chain" id="PRO_1000052748" description="Large ribosomal subunit protein uL5">
    <location>
        <begin position="1"/>
        <end position="181"/>
    </location>
</feature>
<organism>
    <name type="scientific">Helicobacter pylori (strain HPAG1)</name>
    <dbReference type="NCBI Taxonomy" id="357544"/>
    <lineage>
        <taxon>Bacteria</taxon>
        <taxon>Pseudomonadati</taxon>
        <taxon>Campylobacterota</taxon>
        <taxon>Epsilonproteobacteria</taxon>
        <taxon>Campylobacterales</taxon>
        <taxon>Helicobacteraceae</taxon>
        <taxon>Helicobacter</taxon>
    </lineage>
</organism>
<comment type="function">
    <text evidence="1">This is one of the proteins that bind and probably mediate the attachment of the 5S RNA into the large ribosomal subunit, where it forms part of the central protuberance. In the 70S ribosome it contacts protein S13 of the 30S subunit (bridge B1b), connecting the 2 subunits; this bridge is implicated in subunit movement. Contacts the P site tRNA; the 5S rRNA and some of its associated proteins might help stabilize positioning of ribosome-bound tRNAs.</text>
</comment>
<comment type="subunit">
    <text evidence="1">Part of the 50S ribosomal subunit; part of the 5S rRNA/L5/L18/L25 subcomplex. Contacts the 5S rRNA and the P site tRNA. Forms a bridge to the 30S subunit in the 70S ribosome.</text>
</comment>
<comment type="similarity">
    <text evidence="1">Belongs to the universal ribosomal protein uL5 family.</text>
</comment>
<keyword id="KW-0687">Ribonucleoprotein</keyword>
<keyword id="KW-0689">Ribosomal protein</keyword>
<keyword id="KW-0694">RNA-binding</keyword>
<keyword id="KW-0699">rRNA-binding</keyword>
<keyword id="KW-0820">tRNA-binding</keyword>
<proteinExistence type="inferred from homology"/>
<evidence type="ECO:0000255" key="1">
    <source>
        <dbReference type="HAMAP-Rule" id="MF_01333"/>
    </source>
</evidence>
<evidence type="ECO:0000305" key="2"/>
<reference key="1">
    <citation type="journal article" date="2006" name="Proc. Natl. Acad. Sci. U.S.A.">
        <title>The complete genome sequence of a chronic atrophic gastritis Helicobacter pylori strain: evolution during disease progression.</title>
        <authorList>
            <person name="Oh J.D."/>
            <person name="Kling-Baeckhed H."/>
            <person name="Giannakis M."/>
            <person name="Xu J."/>
            <person name="Fulton R.S."/>
            <person name="Fulton L.A."/>
            <person name="Cordum H.S."/>
            <person name="Wang C."/>
            <person name="Elliott G."/>
            <person name="Edwards J."/>
            <person name="Mardis E.R."/>
            <person name="Engstrand L.G."/>
            <person name="Gordon J.I."/>
        </authorList>
    </citation>
    <scope>NUCLEOTIDE SEQUENCE [LARGE SCALE GENOMIC DNA]</scope>
    <source>
        <strain>HPAG1</strain>
    </source>
</reference>
<dbReference type="EMBL" id="CP000241">
    <property type="protein sequence ID" value="ABF85319.1"/>
    <property type="molecule type" value="Genomic_DNA"/>
</dbReference>
<dbReference type="RefSeq" id="WP_000467385.1">
    <property type="nucleotide sequence ID" value="NC_008086.1"/>
</dbReference>
<dbReference type="SMR" id="Q1CRV3"/>
<dbReference type="KEGG" id="hpa:HPAG1_1252"/>
<dbReference type="HOGENOM" id="CLU_061015_2_1_7"/>
<dbReference type="GO" id="GO:1990904">
    <property type="term" value="C:ribonucleoprotein complex"/>
    <property type="evidence" value="ECO:0007669"/>
    <property type="project" value="UniProtKB-KW"/>
</dbReference>
<dbReference type="GO" id="GO:0005840">
    <property type="term" value="C:ribosome"/>
    <property type="evidence" value="ECO:0007669"/>
    <property type="project" value="UniProtKB-KW"/>
</dbReference>
<dbReference type="GO" id="GO:0019843">
    <property type="term" value="F:rRNA binding"/>
    <property type="evidence" value="ECO:0007669"/>
    <property type="project" value="UniProtKB-UniRule"/>
</dbReference>
<dbReference type="GO" id="GO:0003735">
    <property type="term" value="F:structural constituent of ribosome"/>
    <property type="evidence" value="ECO:0007669"/>
    <property type="project" value="InterPro"/>
</dbReference>
<dbReference type="GO" id="GO:0000049">
    <property type="term" value="F:tRNA binding"/>
    <property type="evidence" value="ECO:0007669"/>
    <property type="project" value="UniProtKB-UniRule"/>
</dbReference>
<dbReference type="GO" id="GO:0006412">
    <property type="term" value="P:translation"/>
    <property type="evidence" value="ECO:0007669"/>
    <property type="project" value="UniProtKB-UniRule"/>
</dbReference>
<dbReference type="FunFam" id="3.30.1440.10:FF:000001">
    <property type="entry name" value="50S ribosomal protein L5"/>
    <property type="match status" value="1"/>
</dbReference>
<dbReference type="Gene3D" id="3.30.1440.10">
    <property type="match status" value="1"/>
</dbReference>
<dbReference type="HAMAP" id="MF_01333_B">
    <property type="entry name" value="Ribosomal_uL5_B"/>
    <property type="match status" value="1"/>
</dbReference>
<dbReference type="InterPro" id="IPR002132">
    <property type="entry name" value="Ribosomal_uL5"/>
</dbReference>
<dbReference type="InterPro" id="IPR020930">
    <property type="entry name" value="Ribosomal_uL5_bac-type"/>
</dbReference>
<dbReference type="InterPro" id="IPR031309">
    <property type="entry name" value="Ribosomal_uL5_C"/>
</dbReference>
<dbReference type="InterPro" id="IPR020929">
    <property type="entry name" value="Ribosomal_uL5_CS"/>
</dbReference>
<dbReference type="InterPro" id="IPR022803">
    <property type="entry name" value="Ribosomal_uL5_dom_sf"/>
</dbReference>
<dbReference type="InterPro" id="IPR031310">
    <property type="entry name" value="Ribosomal_uL5_N"/>
</dbReference>
<dbReference type="NCBIfam" id="NF000585">
    <property type="entry name" value="PRK00010.1"/>
    <property type="match status" value="1"/>
</dbReference>
<dbReference type="PANTHER" id="PTHR11994">
    <property type="entry name" value="60S RIBOSOMAL PROTEIN L11-RELATED"/>
    <property type="match status" value="1"/>
</dbReference>
<dbReference type="Pfam" id="PF00281">
    <property type="entry name" value="Ribosomal_L5"/>
    <property type="match status" value="1"/>
</dbReference>
<dbReference type="Pfam" id="PF00673">
    <property type="entry name" value="Ribosomal_L5_C"/>
    <property type="match status" value="1"/>
</dbReference>
<dbReference type="PIRSF" id="PIRSF002161">
    <property type="entry name" value="Ribosomal_L5"/>
    <property type="match status" value="1"/>
</dbReference>
<dbReference type="SUPFAM" id="SSF55282">
    <property type="entry name" value="RL5-like"/>
    <property type="match status" value="1"/>
</dbReference>
<dbReference type="PROSITE" id="PS00358">
    <property type="entry name" value="RIBOSOMAL_L5"/>
    <property type="match status" value="1"/>
</dbReference>
<accession>Q1CRV3</accession>
<protein>
    <recommendedName>
        <fullName evidence="1">Large ribosomal subunit protein uL5</fullName>
    </recommendedName>
    <alternativeName>
        <fullName evidence="2">50S ribosomal protein L5</fullName>
    </alternativeName>
</protein>
<gene>
    <name evidence="1" type="primary">rplE</name>
    <name type="ordered locus">HPAG1_1252</name>
</gene>